<protein>
    <recommendedName>
        <fullName evidence="1">Argininosuccinate synthase</fullName>
        <ecNumber evidence="1">6.3.4.5</ecNumber>
    </recommendedName>
    <alternativeName>
        <fullName evidence="1">Citrulline--aspartate ligase</fullName>
    </alternativeName>
</protein>
<name>ASSY_HAEI8</name>
<sequence>MSNTILQNLPKGQKVGIAFSGGLDTSAALLWMRQKGAVPYAYTANLGQPDEDDYNAIPKKAMAYGAENARLIDCRSQLAHEGIAAIQCGAFHISTGGIPYFNTTPLGRAVTGTMLVAAMKEDDVNIWGDGSTFKGNDIERFYRYGLLTNPNLKIYKPWLDVQFIEELGGRLEMSQFLIENGFDYKMSVEKAYSTDSNMLGATHEAKDLEQLSTGMKIVKPIMGVAFWDEKVEIKPETVTVTFEDGVPVALNGKHFDNAVDLILEANRIGGRHGLGMSDQIENRIIEAKSRGIYEAPGMALLHIAYERLVTGIHNEDTIEQYRINGIRLGRLLYQGRWFDPQALMLRETAQRWVAKAITGTVTLELRRGNDFTILNTESPNLTYEAERLSMEKVEDAPFDPVDRIGQLTMRNLDVSDTRGKLGIYAQTGLLSAIKDSVLPQLGKK</sequence>
<proteinExistence type="inferred from homology"/>
<reference key="1">
    <citation type="journal article" date="2005" name="J. Bacteriol.">
        <title>Genomic sequence of an otitis media isolate of nontypeable Haemophilus influenzae: comparative study with H. influenzae serotype d, strain KW20.</title>
        <authorList>
            <person name="Harrison A."/>
            <person name="Dyer D.W."/>
            <person name="Gillaspy A."/>
            <person name="Ray W.C."/>
            <person name="Mungur R."/>
            <person name="Carson M.B."/>
            <person name="Zhong H."/>
            <person name="Gipson J."/>
            <person name="Gipson M."/>
            <person name="Johnson L.S."/>
            <person name="Lewis L."/>
            <person name="Bakaletz L.O."/>
            <person name="Munson R.S. Jr."/>
        </authorList>
    </citation>
    <scope>NUCLEOTIDE SEQUENCE [LARGE SCALE GENOMIC DNA]</scope>
    <source>
        <strain>86-028NP</strain>
    </source>
</reference>
<dbReference type="EC" id="6.3.4.5" evidence="1"/>
<dbReference type="EMBL" id="CP000057">
    <property type="protein sequence ID" value="AAX88777.1"/>
    <property type="molecule type" value="Genomic_DNA"/>
</dbReference>
<dbReference type="RefSeq" id="WP_005688053.1">
    <property type="nucleotide sequence ID" value="NC_007146.2"/>
</dbReference>
<dbReference type="SMR" id="Q4QJM0"/>
<dbReference type="GeneID" id="93220734"/>
<dbReference type="KEGG" id="hit:NTHI2034"/>
<dbReference type="HOGENOM" id="CLU_032784_4_1_6"/>
<dbReference type="UniPathway" id="UPA00068">
    <property type="reaction ID" value="UER00113"/>
</dbReference>
<dbReference type="Proteomes" id="UP000002525">
    <property type="component" value="Chromosome"/>
</dbReference>
<dbReference type="GO" id="GO:0005737">
    <property type="term" value="C:cytoplasm"/>
    <property type="evidence" value="ECO:0007669"/>
    <property type="project" value="UniProtKB-SubCell"/>
</dbReference>
<dbReference type="GO" id="GO:0004055">
    <property type="term" value="F:argininosuccinate synthase activity"/>
    <property type="evidence" value="ECO:0007669"/>
    <property type="project" value="UniProtKB-UniRule"/>
</dbReference>
<dbReference type="GO" id="GO:0005524">
    <property type="term" value="F:ATP binding"/>
    <property type="evidence" value="ECO:0007669"/>
    <property type="project" value="UniProtKB-UniRule"/>
</dbReference>
<dbReference type="GO" id="GO:0042803">
    <property type="term" value="F:protein homodimerization activity"/>
    <property type="evidence" value="ECO:0007669"/>
    <property type="project" value="InterPro"/>
</dbReference>
<dbReference type="GO" id="GO:0000053">
    <property type="term" value="P:argininosuccinate metabolic process"/>
    <property type="evidence" value="ECO:0007669"/>
    <property type="project" value="TreeGrafter"/>
</dbReference>
<dbReference type="GO" id="GO:0006526">
    <property type="term" value="P:L-arginine biosynthetic process"/>
    <property type="evidence" value="ECO:0007669"/>
    <property type="project" value="UniProtKB-UniRule"/>
</dbReference>
<dbReference type="GO" id="GO:0000050">
    <property type="term" value="P:urea cycle"/>
    <property type="evidence" value="ECO:0007669"/>
    <property type="project" value="TreeGrafter"/>
</dbReference>
<dbReference type="CDD" id="cd01999">
    <property type="entry name" value="ASS"/>
    <property type="match status" value="1"/>
</dbReference>
<dbReference type="FunFam" id="1.10.287.400:FF:000001">
    <property type="entry name" value="Argininosuccinate synthase"/>
    <property type="match status" value="1"/>
</dbReference>
<dbReference type="Gene3D" id="1.10.287.400">
    <property type="match status" value="1"/>
</dbReference>
<dbReference type="Gene3D" id="3.90.1260.10">
    <property type="entry name" value="Argininosuccinate synthetase, chain A, domain 2"/>
    <property type="match status" value="1"/>
</dbReference>
<dbReference type="Gene3D" id="3.40.50.620">
    <property type="entry name" value="HUPs"/>
    <property type="match status" value="1"/>
</dbReference>
<dbReference type="HAMAP" id="MF_00581">
    <property type="entry name" value="Arg_succ_synth_type2"/>
    <property type="match status" value="1"/>
</dbReference>
<dbReference type="InterPro" id="IPR023437">
    <property type="entry name" value="Arg_succ_synth_type2_subfam"/>
</dbReference>
<dbReference type="InterPro" id="IPR048268">
    <property type="entry name" value="Arginosuc_syn_C"/>
</dbReference>
<dbReference type="InterPro" id="IPR048267">
    <property type="entry name" value="Arginosuc_syn_N"/>
</dbReference>
<dbReference type="InterPro" id="IPR001518">
    <property type="entry name" value="Arginosuc_synth"/>
</dbReference>
<dbReference type="InterPro" id="IPR018223">
    <property type="entry name" value="Arginosuc_synth_CS"/>
</dbReference>
<dbReference type="InterPro" id="IPR023434">
    <property type="entry name" value="Arginosuc_synth_type_1_subfam"/>
</dbReference>
<dbReference type="InterPro" id="IPR024074">
    <property type="entry name" value="AS_cat/multimer_dom_body"/>
</dbReference>
<dbReference type="InterPro" id="IPR024073">
    <property type="entry name" value="AS_multimer_C_tail"/>
</dbReference>
<dbReference type="InterPro" id="IPR014729">
    <property type="entry name" value="Rossmann-like_a/b/a_fold"/>
</dbReference>
<dbReference type="NCBIfam" id="TIGR00032">
    <property type="entry name" value="argG"/>
    <property type="match status" value="1"/>
</dbReference>
<dbReference type="NCBIfam" id="NF003779">
    <property type="entry name" value="PRK05370.1"/>
    <property type="match status" value="1"/>
</dbReference>
<dbReference type="PANTHER" id="PTHR11587">
    <property type="entry name" value="ARGININOSUCCINATE SYNTHASE"/>
    <property type="match status" value="1"/>
</dbReference>
<dbReference type="PANTHER" id="PTHR11587:SF2">
    <property type="entry name" value="ARGININOSUCCINATE SYNTHASE"/>
    <property type="match status" value="1"/>
</dbReference>
<dbReference type="Pfam" id="PF20979">
    <property type="entry name" value="Arginosuc_syn_C"/>
    <property type="match status" value="1"/>
</dbReference>
<dbReference type="Pfam" id="PF00764">
    <property type="entry name" value="Arginosuc_synth"/>
    <property type="match status" value="1"/>
</dbReference>
<dbReference type="SUPFAM" id="SSF52402">
    <property type="entry name" value="Adenine nucleotide alpha hydrolases-like"/>
    <property type="match status" value="1"/>
</dbReference>
<dbReference type="SUPFAM" id="SSF69864">
    <property type="entry name" value="Argininosuccinate synthetase, C-terminal domain"/>
    <property type="match status" value="1"/>
</dbReference>
<dbReference type="PROSITE" id="PS00564">
    <property type="entry name" value="ARGININOSUCCIN_SYN_1"/>
    <property type="match status" value="1"/>
</dbReference>
<dbReference type="PROSITE" id="PS00565">
    <property type="entry name" value="ARGININOSUCCIN_SYN_2"/>
    <property type="match status" value="1"/>
</dbReference>
<organism>
    <name type="scientific">Haemophilus influenzae (strain 86-028NP)</name>
    <dbReference type="NCBI Taxonomy" id="281310"/>
    <lineage>
        <taxon>Bacteria</taxon>
        <taxon>Pseudomonadati</taxon>
        <taxon>Pseudomonadota</taxon>
        <taxon>Gammaproteobacteria</taxon>
        <taxon>Pasteurellales</taxon>
        <taxon>Pasteurellaceae</taxon>
        <taxon>Haemophilus</taxon>
    </lineage>
</organism>
<gene>
    <name evidence="1" type="primary">argG</name>
    <name type="ordered locus">NTHI2034</name>
</gene>
<keyword id="KW-0028">Amino-acid biosynthesis</keyword>
<keyword id="KW-0055">Arginine biosynthesis</keyword>
<keyword id="KW-0067">ATP-binding</keyword>
<keyword id="KW-0963">Cytoplasm</keyword>
<keyword id="KW-0436">Ligase</keyword>
<keyword id="KW-0547">Nucleotide-binding</keyword>
<evidence type="ECO:0000255" key="1">
    <source>
        <dbReference type="HAMAP-Rule" id="MF_00581"/>
    </source>
</evidence>
<comment type="catalytic activity">
    <reaction evidence="1">
        <text>L-citrulline + L-aspartate + ATP = 2-(N(omega)-L-arginino)succinate + AMP + diphosphate + H(+)</text>
        <dbReference type="Rhea" id="RHEA:10932"/>
        <dbReference type="ChEBI" id="CHEBI:15378"/>
        <dbReference type="ChEBI" id="CHEBI:29991"/>
        <dbReference type="ChEBI" id="CHEBI:30616"/>
        <dbReference type="ChEBI" id="CHEBI:33019"/>
        <dbReference type="ChEBI" id="CHEBI:57472"/>
        <dbReference type="ChEBI" id="CHEBI:57743"/>
        <dbReference type="ChEBI" id="CHEBI:456215"/>
        <dbReference type="EC" id="6.3.4.5"/>
    </reaction>
</comment>
<comment type="pathway">
    <text evidence="1">Amino-acid biosynthesis; L-arginine biosynthesis; L-arginine from L-ornithine and carbamoyl phosphate: step 2/3.</text>
</comment>
<comment type="subunit">
    <text evidence="1">Homotetramer.</text>
</comment>
<comment type="subcellular location">
    <subcellularLocation>
        <location evidence="1">Cytoplasm</location>
    </subcellularLocation>
</comment>
<comment type="similarity">
    <text evidence="1">Belongs to the argininosuccinate synthase family. Type 2 subfamily.</text>
</comment>
<accession>Q4QJM0</accession>
<feature type="chain" id="PRO_1000025425" description="Argininosuccinate synthase">
    <location>
        <begin position="1"/>
        <end position="444"/>
    </location>
</feature>
<feature type="binding site" evidence="1">
    <location>
        <begin position="18"/>
        <end position="26"/>
    </location>
    <ligand>
        <name>ATP</name>
        <dbReference type="ChEBI" id="CHEBI:30616"/>
    </ligand>
</feature>
<feature type="binding site" evidence="1">
    <location>
        <position position="44"/>
    </location>
    <ligand>
        <name>ATP</name>
        <dbReference type="ChEBI" id="CHEBI:30616"/>
    </ligand>
</feature>
<feature type="binding site" evidence="1">
    <location>
        <position position="100"/>
    </location>
    <ligand>
        <name>L-citrulline</name>
        <dbReference type="ChEBI" id="CHEBI:57743"/>
    </ligand>
</feature>
<feature type="binding site" evidence="1">
    <location>
        <position position="130"/>
    </location>
    <ligand>
        <name>ATP</name>
        <dbReference type="ChEBI" id="CHEBI:30616"/>
    </ligand>
</feature>
<feature type="binding site" evidence="1">
    <location>
        <position position="132"/>
    </location>
    <ligand>
        <name>ATP</name>
        <dbReference type="ChEBI" id="CHEBI:30616"/>
    </ligand>
</feature>
<feature type="binding site" evidence="1">
    <location>
        <position position="132"/>
    </location>
    <ligand>
        <name>L-aspartate</name>
        <dbReference type="ChEBI" id="CHEBI:29991"/>
    </ligand>
</feature>
<feature type="binding site" evidence="1">
    <location>
        <position position="136"/>
    </location>
    <ligand>
        <name>L-aspartate</name>
        <dbReference type="ChEBI" id="CHEBI:29991"/>
    </ligand>
</feature>
<feature type="binding site" evidence="1">
    <location>
        <position position="136"/>
    </location>
    <ligand>
        <name>L-citrulline</name>
        <dbReference type="ChEBI" id="CHEBI:57743"/>
    </ligand>
</feature>
<feature type="binding site" evidence="1">
    <location>
        <position position="137"/>
    </location>
    <ligand>
        <name>ATP</name>
        <dbReference type="ChEBI" id="CHEBI:30616"/>
    </ligand>
</feature>
<feature type="binding site" evidence="1">
    <location>
        <position position="137"/>
    </location>
    <ligand>
        <name>L-aspartate</name>
        <dbReference type="ChEBI" id="CHEBI:29991"/>
    </ligand>
</feature>
<feature type="binding site" evidence="1">
    <location>
        <position position="140"/>
    </location>
    <ligand>
        <name>L-citrulline</name>
        <dbReference type="ChEBI" id="CHEBI:57743"/>
    </ligand>
</feature>
<feature type="binding site" evidence="1">
    <location>
        <position position="193"/>
    </location>
    <ligand>
        <name>L-citrulline</name>
        <dbReference type="ChEBI" id="CHEBI:57743"/>
    </ligand>
</feature>
<feature type="binding site" evidence="1">
    <location>
        <position position="195"/>
    </location>
    <ligand>
        <name>ATP</name>
        <dbReference type="ChEBI" id="CHEBI:30616"/>
    </ligand>
</feature>
<feature type="binding site" evidence="1">
    <location>
        <position position="202"/>
    </location>
    <ligand>
        <name>L-citrulline</name>
        <dbReference type="ChEBI" id="CHEBI:57743"/>
    </ligand>
</feature>
<feature type="binding site" evidence="1">
    <location>
        <position position="204"/>
    </location>
    <ligand>
        <name>L-citrulline</name>
        <dbReference type="ChEBI" id="CHEBI:57743"/>
    </ligand>
</feature>
<feature type="binding site" evidence="1">
    <location>
        <position position="281"/>
    </location>
    <ligand>
        <name>L-citrulline</name>
        <dbReference type="ChEBI" id="CHEBI:57743"/>
    </ligand>
</feature>